<dbReference type="EMBL" id="CR858748">
    <property type="protein sequence ID" value="CAH90957.1"/>
    <property type="molecule type" value="mRNA"/>
</dbReference>
<dbReference type="RefSeq" id="NP_001125550.1">
    <property type="nucleotide sequence ID" value="NM_001132078.1"/>
</dbReference>
<dbReference type="RefSeq" id="XP_024107491.1">
    <property type="nucleotide sequence ID" value="XM_024251723.3"/>
</dbReference>
<dbReference type="RefSeq" id="XP_024107492.1">
    <property type="nucleotide sequence ID" value="XM_024251724.3"/>
</dbReference>
<dbReference type="RefSeq" id="XP_024107493.1">
    <property type="nucleotide sequence ID" value="XM_024251725.3"/>
</dbReference>
<dbReference type="RefSeq" id="XP_054375359.1">
    <property type="nucleotide sequence ID" value="XM_054519384.2"/>
</dbReference>
<dbReference type="RefSeq" id="XP_054375360.1">
    <property type="nucleotide sequence ID" value="XM_054519385.2"/>
</dbReference>
<dbReference type="RefSeq" id="XP_054375361.1">
    <property type="nucleotide sequence ID" value="XM_054519386.2"/>
</dbReference>
<dbReference type="RefSeq" id="XP_054375362.1">
    <property type="nucleotide sequence ID" value="XM_054519387.2"/>
</dbReference>
<dbReference type="RefSeq" id="XP_063569924.1">
    <property type="nucleotide sequence ID" value="XM_063713854.1"/>
</dbReference>
<dbReference type="RefSeq" id="XP_063569925.1">
    <property type="nucleotide sequence ID" value="XM_063713855.1"/>
</dbReference>
<dbReference type="RefSeq" id="XP_063569926.1">
    <property type="nucleotide sequence ID" value="XM_063713856.1"/>
</dbReference>
<dbReference type="FunCoup" id="Q5RBA3">
    <property type="interactions" value="903"/>
</dbReference>
<dbReference type="STRING" id="9601.ENSPPYP00000021404"/>
<dbReference type="Ensembl" id="ENSPPYT00000022270.2">
    <property type="protein sequence ID" value="ENSPPYP00000021404.2"/>
    <property type="gene ID" value="ENSPPYG00000019101.2"/>
</dbReference>
<dbReference type="GeneID" id="100172463"/>
<dbReference type="KEGG" id="pon:100172463"/>
<dbReference type="CTD" id="80256"/>
<dbReference type="eggNOG" id="KOG2306">
    <property type="taxonomic scope" value="Eukaryota"/>
</dbReference>
<dbReference type="GeneTree" id="ENSGT00940000159834"/>
<dbReference type="HOGENOM" id="CLU_031463_0_0_1"/>
<dbReference type="InParanoid" id="Q5RBA3"/>
<dbReference type="OMA" id="CVVEQRG"/>
<dbReference type="OrthoDB" id="8625101at2759"/>
<dbReference type="Proteomes" id="UP000001595">
    <property type="component" value="Chromosome 9"/>
</dbReference>
<dbReference type="GO" id="GO:0005634">
    <property type="term" value="C:nucleus"/>
    <property type="evidence" value="ECO:0007669"/>
    <property type="project" value="UniProtKB-SubCell"/>
</dbReference>
<dbReference type="InterPro" id="IPR033473">
    <property type="entry name" value="Atos-like_C"/>
</dbReference>
<dbReference type="InterPro" id="IPR025261">
    <property type="entry name" value="Atos-like_cons_dom"/>
</dbReference>
<dbReference type="InterPro" id="IPR051506">
    <property type="entry name" value="ATOS_Transcription_Regulators"/>
</dbReference>
<dbReference type="PANTHER" id="PTHR13199:SF12">
    <property type="entry name" value="ATOS HOMOLOG PROTEIN B"/>
    <property type="match status" value="1"/>
</dbReference>
<dbReference type="PANTHER" id="PTHR13199">
    <property type="entry name" value="GH03947P"/>
    <property type="match status" value="1"/>
</dbReference>
<dbReference type="Pfam" id="PF13889">
    <property type="entry name" value="Chromosome_seg"/>
    <property type="match status" value="1"/>
</dbReference>
<dbReference type="Pfam" id="PF13915">
    <property type="entry name" value="DUF4210"/>
    <property type="match status" value="1"/>
</dbReference>
<dbReference type="SMART" id="SM01177">
    <property type="entry name" value="DUF4210"/>
    <property type="match status" value="1"/>
</dbReference>
<feature type="chain" id="PRO_0000313623" description="Atos homolog protein B">
    <location>
        <begin position="1"/>
        <end position="538"/>
    </location>
</feature>
<feature type="region of interest" description="Disordered" evidence="3">
    <location>
        <begin position="1"/>
        <end position="103"/>
    </location>
</feature>
<feature type="region of interest" description="Disordered" evidence="3">
    <location>
        <begin position="153"/>
        <end position="185"/>
    </location>
</feature>
<feature type="region of interest" description="Disordered" evidence="3">
    <location>
        <begin position="197"/>
        <end position="300"/>
    </location>
</feature>
<feature type="region of interest" description="Disordered" evidence="3">
    <location>
        <begin position="323"/>
        <end position="342"/>
    </location>
</feature>
<feature type="region of interest" description="Required for macropage invasion" evidence="2">
    <location>
        <begin position="348"/>
        <end position="430"/>
    </location>
</feature>
<feature type="region of interest" description="Transactivation domain 1 (TAD1)" evidence="2">
    <location>
        <begin position="436"/>
        <end position="444"/>
    </location>
</feature>
<feature type="compositionally biased region" description="Low complexity" evidence="3">
    <location>
        <begin position="1"/>
        <end position="18"/>
    </location>
</feature>
<feature type="compositionally biased region" description="Pro residues" evidence="3">
    <location>
        <begin position="227"/>
        <end position="238"/>
    </location>
</feature>
<feature type="compositionally biased region" description="Low complexity" evidence="3">
    <location>
        <begin position="323"/>
        <end position="334"/>
    </location>
</feature>
<feature type="modified residue" description="Phosphoserine" evidence="2">
    <location>
        <position position="254"/>
    </location>
</feature>
<feature type="modified residue" description="Phosphoserine" evidence="2">
    <location>
        <position position="255"/>
    </location>
</feature>
<organism>
    <name type="scientific">Pongo abelii</name>
    <name type="common">Sumatran orangutan</name>
    <name type="synonym">Pongo pygmaeus abelii</name>
    <dbReference type="NCBI Taxonomy" id="9601"/>
    <lineage>
        <taxon>Eukaryota</taxon>
        <taxon>Metazoa</taxon>
        <taxon>Chordata</taxon>
        <taxon>Craniata</taxon>
        <taxon>Vertebrata</taxon>
        <taxon>Euteleostomi</taxon>
        <taxon>Mammalia</taxon>
        <taxon>Eutheria</taxon>
        <taxon>Euarchontoglires</taxon>
        <taxon>Primates</taxon>
        <taxon>Haplorrhini</taxon>
        <taxon>Catarrhini</taxon>
        <taxon>Hominidae</taxon>
        <taxon>Pongo</taxon>
    </lineage>
</organism>
<comment type="function">
    <text evidence="2">Transcription regulator that may syncronize transcriptional and translational programs.</text>
</comment>
<comment type="subcellular location">
    <subcellularLocation>
        <location evidence="1">Nucleus</location>
    </subcellularLocation>
</comment>
<comment type="domain">
    <text evidence="2">The protein contains a transactivation domain (TAD) which may be required for transcriptional activation of a subset of target genes.</text>
</comment>
<comment type="similarity">
    <text evidence="4">Belongs to the ATOS family.</text>
</comment>
<keyword id="KW-0539">Nucleus</keyword>
<keyword id="KW-0597">Phosphoprotein</keyword>
<keyword id="KW-1185">Reference proteome</keyword>
<reference key="1">
    <citation type="submission" date="2004-11" db="EMBL/GenBank/DDBJ databases">
        <authorList>
            <consortium name="The German cDNA consortium"/>
        </authorList>
    </citation>
    <scope>NUCLEOTIDE SEQUENCE [LARGE SCALE MRNA]</scope>
    <source>
        <tissue>Heart</tissue>
    </source>
</reference>
<gene>
    <name evidence="2" type="primary">ATOSB</name>
    <name evidence="2" type="synonym">FAM214B</name>
</gene>
<name>ATOSB_PONAB</name>
<sequence>MRHVQAEPSPSSEPEAGPSQPPVRQGALQGGLLMGYSPAGGATSPGVYQVSIFSPPAGTSEPHRALKRQAPPTEGPRELKRGPGLGAREGLPPEEPSTVGLLGPEGLGLGLGVASQHFSHRGLCVVEQRSSVTSSWTSGAWSPPCPPSNASCNTLHTRDWASPDPGGQGSLGESPGPAPPGQLHTLDTDLHSLAQIGGKSPVAGVGNGGSLWPRESPGTANGHSPEHTPPGPGPPGPCPTKRRLLPAGEAPDVSSEEEGPAPRRRRGSLGHPTAANSSDAKATPFWSHLLPGPKEPVLDPTDCGPMGRRLKGARRLKLSPLRSLRKGPGLLSPPSASPVPTPAVSRTLLGSFEESLLRGRFAPSGHIEGFTAEIGASGSYCPQHVTLPVTVTFFDVSEQNAPAPFLGIVDLNPLGRKGYSVPKVGTIQVTLFNPNQTVVKMFLVTFDFSDMPAAHMTFLRHRLFLVPVGEEGNANPTHRLLCYLLHLRFRSSRSGRLSLHGDIRLLFSRRSLELDTGLPYELQAVTEAPHNPRYSPLP</sequence>
<proteinExistence type="evidence at transcript level"/>
<evidence type="ECO:0000250" key="1">
    <source>
        <dbReference type="UniProtKB" id="Q7JXG9"/>
    </source>
</evidence>
<evidence type="ECO:0000250" key="2">
    <source>
        <dbReference type="UniProtKB" id="Q8BR27"/>
    </source>
</evidence>
<evidence type="ECO:0000256" key="3">
    <source>
        <dbReference type="SAM" id="MobiDB-lite"/>
    </source>
</evidence>
<evidence type="ECO:0000305" key="4"/>
<protein>
    <recommendedName>
        <fullName>Atos homolog protein B</fullName>
    </recommendedName>
</protein>
<accession>Q5RBA3</accession>